<proteinExistence type="inferred from homology"/>
<dbReference type="EMBL" id="BX248359">
    <property type="protein sequence ID" value="CAE50296.1"/>
    <property type="molecule type" value="Genomic_DNA"/>
</dbReference>
<dbReference type="RefSeq" id="WP_003852425.1">
    <property type="nucleotide sequence ID" value="NC_002935.2"/>
</dbReference>
<dbReference type="SMR" id="Q6NFX0"/>
<dbReference type="STRING" id="257309.DIP1766"/>
<dbReference type="GeneID" id="97332636"/>
<dbReference type="KEGG" id="cdi:DIP1766"/>
<dbReference type="HOGENOM" id="CLU_160655_0_1_11"/>
<dbReference type="Proteomes" id="UP000002198">
    <property type="component" value="Chromosome"/>
</dbReference>
<dbReference type="GO" id="GO:0005829">
    <property type="term" value="C:cytosol"/>
    <property type="evidence" value="ECO:0007669"/>
    <property type="project" value="TreeGrafter"/>
</dbReference>
<dbReference type="GO" id="GO:0015935">
    <property type="term" value="C:small ribosomal subunit"/>
    <property type="evidence" value="ECO:0007669"/>
    <property type="project" value="TreeGrafter"/>
</dbReference>
<dbReference type="GO" id="GO:0070181">
    <property type="term" value="F:small ribosomal subunit rRNA binding"/>
    <property type="evidence" value="ECO:0007669"/>
    <property type="project" value="TreeGrafter"/>
</dbReference>
<dbReference type="GO" id="GO:0003735">
    <property type="term" value="F:structural constituent of ribosome"/>
    <property type="evidence" value="ECO:0007669"/>
    <property type="project" value="InterPro"/>
</dbReference>
<dbReference type="GO" id="GO:0006412">
    <property type="term" value="P:translation"/>
    <property type="evidence" value="ECO:0007669"/>
    <property type="project" value="UniProtKB-UniRule"/>
</dbReference>
<dbReference type="FunFam" id="1.20.58.110:FF:000001">
    <property type="entry name" value="30S ribosomal protein S20"/>
    <property type="match status" value="1"/>
</dbReference>
<dbReference type="Gene3D" id="1.20.58.110">
    <property type="entry name" value="Ribosomal protein S20"/>
    <property type="match status" value="1"/>
</dbReference>
<dbReference type="HAMAP" id="MF_00500">
    <property type="entry name" value="Ribosomal_bS20"/>
    <property type="match status" value="1"/>
</dbReference>
<dbReference type="InterPro" id="IPR002583">
    <property type="entry name" value="Ribosomal_bS20"/>
</dbReference>
<dbReference type="InterPro" id="IPR036510">
    <property type="entry name" value="Ribosomal_bS20_sf"/>
</dbReference>
<dbReference type="NCBIfam" id="TIGR00029">
    <property type="entry name" value="S20"/>
    <property type="match status" value="1"/>
</dbReference>
<dbReference type="PANTHER" id="PTHR33398">
    <property type="entry name" value="30S RIBOSOMAL PROTEIN S20"/>
    <property type="match status" value="1"/>
</dbReference>
<dbReference type="PANTHER" id="PTHR33398:SF1">
    <property type="entry name" value="SMALL RIBOSOMAL SUBUNIT PROTEIN BS20C"/>
    <property type="match status" value="1"/>
</dbReference>
<dbReference type="Pfam" id="PF01649">
    <property type="entry name" value="Ribosomal_S20p"/>
    <property type="match status" value="1"/>
</dbReference>
<dbReference type="SUPFAM" id="SSF46992">
    <property type="entry name" value="Ribosomal protein S20"/>
    <property type="match status" value="1"/>
</dbReference>
<name>RS20_CORDI</name>
<evidence type="ECO:0000255" key="1">
    <source>
        <dbReference type="HAMAP-Rule" id="MF_00500"/>
    </source>
</evidence>
<evidence type="ECO:0000305" key="2"/>
<keyword id="KW-1185">Reference proteome</keyword>
<keyword id="KW-0687">Ribonucleoprotein</keyword>
<keyword id="KW-0689">Ribosomal protein</keyword>
<keyword id="KW-0694">RNA-binding</keyword>
<keyword id="KW-0699">rRNA-binding</keyword>
<accession>Q6NFX0</accession>
<reference key="1">
    <citation type="journal article" date="2003" name="Nucleic Acids Res.">
        <title>The complete genome sequence and analysis of Corynebacterium diphtheriae NCTC13129.</title>
        <authorList>
            <person name="Cerdeno-Tarraga A.-M."/>
            <person name="Efstratiou A."/>
            <person name="Dover L.G."/>
            <person name="Holden M.T.G."/>
            <person name="Pallen M.J."/>
            <person name="Bentley S.D."/>
            <person name="Besra G.S."/>
            <person name="Churcher C.M."/>
            <person name="James K.D."/>
            <person name="De Zoysa A."/>
            <person name="Chillingworth T."/>
            <person name="Cronin A."/>
            <person name="Dowd L."/>
            <person name="Feltwell T."/>
            <person name="Hamlin N."/>
            <person name="Holroyd S."/>
            <person name="Jagels K."/>
            <person name="Moule S."/>
            <person name="Quail M.A."/>
            <person name="Rabbinowitsch E."/>
            <person name="Rutherford K.M."/>
            <person name="Thomson N.R."/>
            <person name="Unwin L."/>
            <person name="Whitehead S."/>
            <person name="Barrell B.G."/>
            <person name="Parkhill J."/>
        </authorList>
    </citation>
    <scope>NUCLEOTIDE SEQUENCE [LARGE SCALE GENOMIC DNA]</scope>
    <source>
        <strain>ATCC 700971 / NCTC 13129 / Biotype gravis</strain>
    </source>
</reference>
<sequence>MANIKSQKKRILTNEKARQRNQAIRSAVRTEIRKFRAAVAAGDKAAAEAQLRVASRALDKSVTKGVFHRNNAANKKSNMAHALNKMA</sequence>
<organism>
    <name type="scientific">Corynebacterium diphtheriae (strain ATCC 700971 / NCTC 13129 / Biotype gravis)</name>
    <dbReference type="NCBI Taxonomy" id="257309"/>
    <lineage>
        <taxon>Bacteria</taxon>
        <taxon>Bacillati</taxon>
        <taxon>Actinomycetota</taxon>
        <taxon>Actinomycetes</taxon>
        <taxon>Mycobacteriales</taxon>
        <taxon>Corynebacteriaceae</taxon>
        <taxon>Corynebacterium</taxon>
    </lineage>
</organism>
<protein>
    <recommendedName>
        <fullName evidence="1">Small ribosomal subunit protein bS20</fullName>
    </recommendedName>
    <alternativeName>
        <fullName evidence="2">30S ribosomal protein S20</fullName>
    </alternativeName>
</protein>
<feature type="chain" id="PRO_0000167951" description="Small ribosomal subunit protein bS20">
    <location>
        <begin position="1"/>
        <end position="87"/>
    </location>
</feature>
<gene>
    <name evidence="1" type="primary">rpsT</name>
    <name type="ordered locus">DIP1766</name>
</gene>
<comment type="function">
    <text evidence="1">Binds directly to 16S ribosomal RNA.</text>
</comment>
<comment type="similarity">
    <text evidence="1">Belongs to the bacterial ribosomal protein bS20 family.</text>
</comment>